<organism>
    <name type="scientific">Tolumonas auensis (strain DSM 9187 / NBRC 110442 / TA 4)</name>
    <dbReference type="NCBI Taxonomy" id="595494"/>
    <lineage>
        <taxon>Bacteria</taxon>
        <taxon>Pseudomonadati</taxon>
        <taxon>Pseudomonadota</taxon>
        <taxon>Gammaproteobacteria</taxon>
        <taxon>Aeromonadales</taxon>
        <taxon>Aeromonadaceae</taxon>
        <taxon>Tolumonas</taxon>
    </lineage>
</organism>
<dbReference type="EC" id="4.2.1.20" evidence="1"/>
<dbReference type="EMBL" id="CP001616">
    <property type="protein sequence ID" value="ACQ92568.1"/>
    <property type="molecule type" value="Genomic_DNA"/>
</dbReference>
<dbReference type="RefSeq" id="WP_012729167.1">
    <property type="nucleotide sequence ID" value="NC_012691.1"/>
</dbReference>
<dbReference type="SMR" id="C4LC89"/>
<dbReference type="STRING" id="595494.Tola_0940"/>
<dbReference type="KEGG" id="tau:Tola_0940"/>
<dbReference type="eggNOG" id="COG0133">
    <property type="taxonomic scope" value="Bacteria"/>
</dbReference>
<dbReference type="HOGENOM" id="CLU_016734_3_1_6"/>
<dbReference type="OrthoDB" id="9766131at2"/>
<dbReference type="UniPathway" id="UPA00035">
    <property type="reaction ID" value="UER00044"/>
</dbReference>
<dbReference type="Proteomes" id="UP000009073">
    <property type="component" value="Chromosome"/>
</dbReference>
<dbReference type="GO" id="GO:0005737">
    <property type="term" value="C:cytoplasm"/>
    <property type="evidence" value="ECO:0007669"/>
    <property type="project" value="TreeGrafter"/>
</dbReference>
<dbReference type="GO" id="GO:0004834">
    <property type="term" value="F:tryptophan synthase activity"/>
    <property type="evidence" value="ECO:0007669"/>
    <property type="project" value="UniProtKB-UniRule"/>
</dbReference>
<dbReference type="CDD" id="cd06446">
    <property type="entry name" value="Trp-synth_B"/>
    <property type="match status" value="1"/>
</dbReference>
<dbReference type="FunFam" id="3.40.50.1100:FF:000001">
    <property type="entry name" value="Tryptophan synthase beta chain"/>
    <property type="match status" value="1"/>
</dbReference>
<dbReference type="FunFam" id="3.40.50.1100:FF:000004">
    <property type="entry name" value="Tryptophan synthase beta chain"/>
    <property type="match status" value="1"/>
</dbReference>
<dbReference type="Gene3D" id="3.40.50.1100">
    <property type="match status" value="2"/>
</dbReference>
<dbReference type="HAMAP" id="MF_00133">
    <property type="entry name" value="Trp_synth_beta"/>
    <property type="match status" value="1"/>
</dbReference>
<dbReference type="InterPro" id="IPR006653">
    <property type="entry name" value="Trp_synth_b_CS"/>
</dbReference>
<dbReference type="InterPro" id="IPR006654">
    <property type="entry name" value="Trp_synth_beta"/>
</dbReference>
<dbReference type="InterPro" id="IPR023026">
    <property type="entry name" value="Trp_synth_beta/beta-like"/>
</dbReference>
<dbReference type="InterPro" id="IPR001926">
    <property type="entry name" value="TrpB-like_PALP"/>
</dbReference>
<dbReference type="InterPro" id="IPR036052">
    <property type="entry name" value="TrpB-like_PALP_sf"/>
</dbReference>
<dbReference type="NCBIfam" id="TIGR00263">
    <property type="entry name" value="trpB"/>
    <property type="match status" value="1"/>
</dbReference>
<dbReference type="PANTHER" id="PTHR48077:SF3">
    <property type="entry name" value="TRYPTOPHAN SYNTHASE"/>
    <property type="match status" value="1"/>
</dbReference>
<dbReference type="PANTHER" id="PTHR48077">
    <property type="entry name" value="TRYPTOPHAN SYNTHASE-RELATED"/>
    <property type="match status" value="1"/>
</dbReference>
<dbReference type="Pfam" id="PF00291">
    <property type="entry name" value="PALP"/>
    <property type="match status" value="1"/>
</dbReference>
<dbReference type="PIRSF" id="PIRSF001413">
    <property type="entry name" value="Trp_syn_beta"/>
    <property type="match status" value="1"/>
</dbReference>
<dbReference type="SUPFAM" id="SSF53686">
    <property type="entry name" value="Tryptophan synthase beta subunit-like PLP-dependent enzymes"/>
    <property type="match status" value="1"/>
</dbReference>
<dbReference type="PROSITE" id="PS00168">
    <property type="entry name" value="TRP_SYNTHASE_BETA"/>
    <property type="match status" value="1"/>
</dbReference>
<protein>
    <recommendedName>
        <fullName evidence="1">Tryptophan synthase beta chain</fullName>
        <ecNumber evidence="1">4.2.1.20</ecNumber>
    </recommendedName>
</protein>
<accession>C4LC89</accession>
<feature type="chain" id="PRO_1000203196" description="Tryptophan synthase beta chain">
    <location>
        <begin position="1"/>
        <end position="397"/>
    </location>
</feature>
<feature type="modified residue" description="N6-(pyridoxal phosphate)lysine" evidence="1">
    <location>
        <position position="86"/>
    </location>
</feature>
<reference key="1">
    <citation type="submission" date="2009-05" db="EMBL/GenBank/DDBJ databases">
        <title>Complete sequence of Tolumonas auensis DSM 9187.</title>
        <authorList>
            <consortium name="US DOE Joint Genome Institute"/>
            <person name="Lucas S."/>
            <person name="Copeland A."/>
            <person name="Lapidus A."/>
            <person name="Glavina del Rio T."/>
            <person name="Tice H."/>
            <person name="Bruce D."/>
            <person name="Goodwin L."/>
            <person name="Pitluck S."/>
            <person name="Chertkov O."/>
            <person name="Brettin T."/>
            <person name="Detter J.C."/>
            <person name="Han C."/>
            <person name="Larimer F."/>
            <person name="Land M."/>
            <person name="Hauser L."/>
            <person name="Kyrpides N."/>
            <person name="Mikhailova N."/>
            <person name="Spring S."/>
            <person name="Beller H."/>
        </authorList>
    </citation>
    <scope>NUCLEOTIDE SEQUENCE [LARGE SCALE GENOMIC DNA]</scope>
    <source>
        <strain>DSM 9187 / NBRC 110442 / TA 4</strain>
    </source>
</reference>
<proteinExistence type="inferred from homology"/>
<sequence length="397" mass="42974">MTLLDPFFGEFGGMYSPQILMPVLLELEKAFVDAKDDPEFQAEFQHLLTEYAGRPTPLTLCRNLTKGTKTKIYLKREDLLHGGAHKTNQVLGQALLAKRMGKTRIIAETGAGQHGVATALACALLDLPCRIYMGAVDCERQKPNVFRMRLMGAEVIPVHAGSSTLKDACNEAMRDWTANYKDTHYILGTAAGPHPFPTIVREFQRMIGEEAKEQILKAEGRLPDAVVACVGGGSNAIGMFATFIEEEGVRLIGVEPAGHGIETGKHGAPIGHARKGIYLGMVSFLMQNEDGQVEESHSISAGLDFPSVGPQHAYLSSIGRAQYPSVTDQEALDAFQELSLREGIIPALESSHALAHALKMARSEPEKEQILIVNLSGRGDKDIFTVANALEGEGALS</sequence>
<comment type="function">
    <text evidence="1">The beta subunit is responsible for the synthesis of L-tryptophan from indole and L-serine.</text>
</comment>
<comment type="catalytic activity">
    <reaction evidence="1">
        <text>(1S,2R)-1-C-(indol-3-yl)glycerol 3-phosphate + L-serine = D-glyceraldehyde 3-phosphate + L-tryptophan + H2O</text>
        <dbReference type="Rhea" id="RHEA:10532"/>
        <dbReference type="ChEBI" id="CHEBI:15377"/>
        <dbReference type="ChEBI" id="CHEBI:33384"/>
        <dbReference type="ChEBI" id="CHEBI:57912"/>
        <dbReference type="ChEBI" id="CHEBI:58866"/>
        <dbReference type="ChEBI" id="CHEBI:59776"/>
        <dbReference type="EC" id="4.2.1.20"/>
    </reaction>
</comment>
<comment type="cofactor">
    <cofactor evidence="1">
        <name>pyridoxal 5'-phosphate</name>
        <dbReference type="ChEBI" id="CHEBI:597326"/>
    </cofactor>
</comment>
<comment type="pathway">
    <text evidence="1">Amino-acid biosynthesis; L-tryptophan biosynthesis; L-tryptophan from chorismate: step 5/5.</text>
</comment>
<comment type="subunit">
    <text evidence="1">Tetramer of two alpha and two beta chains.</text>
</comment>
<comment type="similarity">
    <text evidence="1">Belongs to the TrpB family.</text>
</comment>
<keyword id="KW-0028">Amino-acid biosynthesis</keyword>
<keyword id="KW-0057">Aromatic amino acid biosynthesis</keyword>
<keyword id="KW-0456">Lyase</keyword>
<keyword id="KW-0663">Pyridoxal phosphate</keyword>
<keyword id="KW-1185">Reference proteome</keyword>
<keyword id="KW-0822">Tryptophan biosynthesis</keyword>
<name>TRPB_TOLAT</name>
<evidence type="ECO:0000255" key="1">
    <source>
        <dbReference type="HAMAP-Rule" id="MF_00133"/>
    </source>
</evidence>
<gene>
    <name evidence="1" type="primary">trpB</name>
    <name type="ordered locus">Tola_0940</name>
</gene>